<reference key="1">
    <citation type="journal article" date="2007" name="PLoS Genet.">
        <title>Patterns and implications of gene gain and loss in the evolution of Prochlorococcus.</title>
        <authorList>
            <person name="Kettler G.C."/>
            <person name="Martiny A.C."/>
            <person name="Huang K."/>
            <person name="Zucker J."/>
            <person name="Coleman M.L."/>
            <person name="Rodrigue S."/>
            <person name="Chen F."/>
            <person name="Lapidus A."/>
            <person name="Ferriera S."/>
            <person name="Johnson J."/>
            <person name="Steglich C."/>
            <person name="Church G.M."/>
            <person name="Richardson P."/>
            <person name="Chisholm S.W."/>
        </authorList>
    </citation>
    <scope>NUCLEOTIDE SEQUENCE [LARGE SCALE GENOMIC DNA]</scope>
    <source>
        <strain>MIT 9303</strain>
    </source>
</reference>
<sequence>MSTKLKGPDGRIPDRLPDGTPAVSWERRWTEGSLPLWLVATVGGMAVLSVLGLFFFGSFTGVGSA</sequence>
<name>PSBJ_PROM3</name>
<keyword id="KW-0472">Membrane</keyword>
<keyword id="KW-0602">Photosynthesis</keyword>
<keyword id="KW-0604">Photosystem II</keyword>
<keyword id="KW-0674">Reaction center</keyword>
<keyword id="KW-0793">Thylakoid</keyword>
<keyword id="KW-0812">Transmembrane</keyword>
<keyword id="KW-1133">Transmembrane helix</keyword>
<comment type="function">
    <text evidence="1">One of the components of the core complex of photosystem II (PSII). PSII is a light-driven water:plastoquinone oxidoreductase that uses light energy to abstract electrons from H(2)O, generating O(2) and a proton gradient subsequently used for ATP formation. It consists of a core antenna complex that captures photons, and an electron transfer chain that converts photonic excitation into a charge separation.</text>
</comment>
<comment type="subunit">
    <text evidence="3">PSII is composed of 1 copy each of membrane proteins PsbA, PsbB, PsbC, PsbD, PsbE, PsbF, PsbH, PsbI, PsbJ, PsbK, PsbL, PsbM, PsbT, PsbX, PsbY, Psb30/Ycf12, peripheral proteins PsbO, CyanoQ (PsbQ), PsbU, PsbV and a large number of cofactors. It forms dimeric complexes.</text>
</comment>
<comment type="subcellular location">
    <subcellularLocation>
        <location evidence="1">Cellular thylakoid membrane</location>
        <topology evidence="1">Single-pass membrane protein</topology>
    </subcellularLocation>
</comment>
<comment type="similarity">
    <text evidence="1">Belongs to the PsbJ family.</text>
</comment>
<organism>
    <name type="scientific">Prochlorococcus marinus (strain MIT 9303)</name>
    <dbReference type="NCBI Taxonomy" id="59922"/>
    <lineage>
        <taxon>Bacteria</taxon>
        <taxon>Bacillati</taxon>
        <taxon>Cyanobacteriota</taxon>
        <taxon>Cyanophyceae</taxon>
        <taxon>Synechococcales</taxon>
        <taxon>Prochlorococcaceae</taxon>
        <taxon>Prochlorococcus</taxon>
    </lineage>
</organism>
<proteinExistence type="inferred from homology"/>
<dbReference type="EMBL" id="CP000554">
    <property type="protein sequence ID" value="ABM79263.1"/>
    <property type="molecule type" value="Genomic_DNA"/>
</dbReference>
<dbReference type="RefSeq" id="WP_011827107.1">
    <property type="nucleotide sequence ID" value="NC_008820.1"/>
</dbReference>
<dbReference type="SMR" id="A2CCQ3"/>
<dbReference type="STRING" id="59922.P9303_25321"/>
<dbReference type="KEGG" id="pmf:P9303_25321"/>
<dbReference type="HOGENOM" id="CLU_2829784_0_0_3"/>
<dbReference type="BioCyc" id="PMAR59922:G1G80-2223-MONOMER"/>
<dbReference type="Proteomes" id="UP000002274">
    <property type="component" value="Chromosome"/>
</dbReference>
<dbReference type="GO" id="GO:0009539">
    <property type="term" value="C:photosystem II reaction center"/>
    <property type="evidence" value="ECO:0007669"/>
    <property type="project" value="InterPro"/>
</dbReference>
<dbReference type="GO" id="GO:0031676">
    <property type="term" value="C:plasma membrane-derived thylakoid membrane"/>
    <property type="evidence" value="ECO:0007669"/>
    <property type="project" value="UniProtKB-SubCell"/>
</dbReference>
<dbReference type="GO" id="GO:0015979">
    <property type="term" value="P:photosynthesis"/>
    <property type="evidence" value="ECO:0007669"/>
    <property type="project" value="UniProtKB-UniRule"/>
</dbReference>
<dbReference type="Gene3D" id="6.10.250.2070">
    <property type="match status" value="1"/>
</dbReference>
<dbReference type="HAMAP" id="MF_01305">
    <property type="entry name" value="PSII_PsbJ"/>
    <property type="match status" value="1"/>
</dbReference>
<dbReference type="InterPro" id="IPR002682">
    <property type="entry name" value="PSII_PsbJ"/>
</dbReference>
<dbReference type="InterPro" id="IPR037267">
    <property type="entry name" value="PSII_PsbJ_sf"/>
</dbReference>
<dbReference type="NCBIfam" id="NF002722">
    <property type="entry name" value="PRK02565.1"/>
    <property type="match status" value="1"/>
</dbReference>
<dbReference type="Pfam" id="PF01788">
    <property type="entry name" value="PsbJ"/>
    <property type="match status" value="1"/>
</dbReference>
<dbReference type="SUPFAM" id="SSF161021">
    <property type="entry name" value="Photosystem II reaction center protein J, PsbJ"/>
    <property type="match status" value="1"/>
</dbReference>
<feature type="chain" id="PRO_0000292228" description="Photosystem II reaction center protein J">
    <location>
        <begin position="1"/>
        <end position="65"/>
    </location>
</feature>
<feature type="transmembrane region" description="Helical" evidence="1">
    <location>
        <begin position="36"/>
        <end position="56"/>
    </location>
</feature>
<feature type="region of interest" description="Disordered" evidence="2">
    <location>
        <begin position="1"/>
        <end position="20"/>
    </location>
</feature>
<feature type="compositionally biased region" description="Basic and acidic residues" evidence="2">
    <location>
        <begin position="1"/>
        <end position="17"/>
    </location>
</feature>
<accession>A2CCQ3</accession>
<evidence type="ECO:0000255" key="1">
    <source>
        <dbReference type="HAMAP-Rule" id="MF_01305"/>
    </source>
</evidence>
<evidence type="ECO:0000256" key="2">
    <source>
        <dbReference type="SAM" id="MobiDB-lite"/>
    </source>
</evidence>
<evidence type="ECO:0000305" key="3"/>
<gene>
    <name evidence="1" type="primary">psbJ</name>
    <name type="ordered locus">P9303_25321</name>
</gene>
<protein>
    <recommendedName>
        <fullName evidence="1">Photosystem II reaction center protein J</fullName>
        <shortName evidence="1">PSII-J</shortName>
    </recommendedName>
</protein>